<organism>
    <name type="scientific">Homo sapiens</name>
    <name type="common">Human</name>
    <dbReference type="NCBI Taxonomy" id="9606"/>
    <lineage>
        <taxon>Eukaryota</taxon>
        <taxon>Metazoa</taxon>
        <taxon>Chordata</taxon>
        <taxon>Craniata</taxon>
        <taxon>Vertebrata</taxon>
        <taxon>Euteleostomi</taxon>
        <taxon>Mammalia</taxon>
        <taxon>Eutheria</taxon>
        <taxon>Euarchontoglires</taxon>
        <taxon>Primates</taxon>
        <taxon>Haplorrhini</taxon>
        <taxon>Catarrhini</taxon>
        <taxon>Hominidae</taxon>
        <taxon>Homo</taxon>
    </lineage>
</organism>
<keyword id="KW-0002">3D-structure</keyword>
<keyword id="KW-0007">Acetylation</keyword>
<keyword id="KW-0963">Cytoplasm</keyword>
<keyword id="KW-0903">Direct protein sequencing</keyword>
<keyword id="KW-0343">GTPase activation</keyword>
<keyword id="KW-0597">Phosphoprotein</keyword>
<keyword id="KW-1267">Proteomics identification</keyword>
<keyword id="KW-1185">Reference proteome</keyword>
<sequence length="201" mass="22988">MTEKAPEPHVEEDDDDELDSKLNYKPPPQKSLKELQEMDKDDESLIKYKKTLLGDGPVVTDPKAPNVVVTRLTLVCESAPGPITMDLTGDLEALKKETIVLKEGSEYRVKIHFKVNRDIVSGLKYVQHTYRTGVKVDKATFMVGSYGPRPEEYEFLTPVEEAPKGMLARGTYHNKSFFTDDDKQDHLSWEWNLSIKKEWTE</sequence>
<reference key="1">
    <citation type="journal article" date="1993" name="Proc. Natl. Acad. Sci. U.S.A.">
        <title>Ly-GDI, a GDP-dissociation inhibitor of the RhoA GTP-binding protein, is expressed preferentially in lymphocytes.</title>
        <authorList>
            <person name="Scherle P."/>
            <person name="Behrens T."/>
            <person name="Staudt L.M."/>
        </authorList>
    </citation>
    <scope>NUCLEOTIDE SEQUENCE [MRNA]</scope>
    <scope>FUNCTION</scope>
    <scope>TISSUE SPECIFICITY</scope>
</reference>
<reference key="2">
    <citation type="journal article" date="1993" name="Exp. Cell Res.">
        <title>Identification of two human Rho GDP dissociation inhibitor proteins whose overexpression leads to disruption of the actin cytoskeleton.</title>
        <authorList>
            <person name="Leffers H."/>
            <person name="Nielsen M.S."/>
            <person name="Andersen A.H."/>
            <person name="Honore B."/>
            <person name="Madsen P."/>
            <person name="Vandekerckhove J."/>
            <person name="Celis J.E."/>
        </authorList>
    </citation>
    <scope>NUCLEOTIDE SEQUENCE [MRNA]</scope>
    <scope>FUNCTION</scope>
</reference>
<reference key="3">
    <citation type="journal article" date="1993" name="Proc. Natl. Acad. Sci. U.S.A.">
        <title>cDNA cloning of a human mRNA preferentially expressed in hematopoietic cells and with homology to a GDP-dissociation inhibitor for the rho GTP-binding proteins.</title>
        <authorList>
            <person name="Lelias J.M."/>
            <person name="Adra C.N."/>
            <person name="Wulf G.M."/>
            <person name="Guillemot J.-C."/>
            <person name="Caput D."/>
            <person name="Lim B."/>
        </authorList>
    </citation>
    <scope>NUCLEOTIDE SEQUENCE [MRNA]</scope>
</reference>
<reference key="4">
    <citation type="submission" date="2002-04" db="EMBL/GenBank/DDBJ databases">
        <title>cDNA clones of human proteins involved in signal transduction sequenced by the Guthrie cDNA resource center (www.cdna.org).</title>
        <authorList>
            <person name="Puhl H.L. III"/>
            <person name="Ikeda S.R."/>
            <person name="Aronstam R.S."/>
        </authorList>
    </citation>
    <scope>NUCLEOTIDE SEQUENCE [LARGE SCALE MRNA]</scope>
    <source>
        <tissue>Brain</tissue>
    </source>
</reference>
<reference key="5">
    <citation type="journal article" date="2008" name="Nat. Methods">
        <title>Human protein factory for converting the transcriptome into an in vitro-expressed proteome.</title>
        <authorList>
            <person name="Goshima N."/>
            <person name="Kawamura Y."/>
            <person name="Fukumoto A."/>
            <person name="Miura A."/>
            <person name="Honma R."/>
            <person name="Satoh R."/>
            <person name="Wakamatsu A."/>
            <person name="Yamamoto J."/>
            <person name="Kimura K."/>
            <person name="Nishikawa T."/>
            <person name="Andoh T."/>
            <person name="Iida Y."/>
            <person name="Ishikawa K."/>
            <person name="Ito E."/>
            <person name="Kagawa N."/>
            <person name="Kaminaga C."/>
            <person name="Kanehori K."/>
            <person name="Kawakami B."/>
            <person name="Kenmochi K."/>
            <person name="Kimura R."/>
            <person name="Kobayashi M."/>
            <person name="Kuroita T."/>
            <person name="Kuwayama H."/>
            <person name="Maruyama Y."/>
            <person name="Matsuo K."/>
            <person name="Minami K."/>
            <person name="Mitsubori M."/>
            <person name="Mori M."/>
            <person name="Morishita R."/>
            <person name="Murase A."/>
            <person name="Nishikawa A."/>
            <person name="Nishikawa S."/>
            <person name="Okamoto T."/>
            <person name="Sakagami N."/>
            <person name="Sakamoto Y."/>
            <person name="Sasaki Y."/>
            <person name="Seki T."/>
            <person name="Sono S."/>
            <person name="Sugiyama A."/>
            <person name="Sumiya T."/>
            <person name="Takayama T."/>
            <person name="Takayama Y."/>
            <person name="Takeda H."/>
            <person name="Togashi T."/>
            <person name="Yahata K."/>
            <person name="Yamada H."/>
            <person name="Yanagisawa Y."/>
            <person name="Endo Y."/>
            <person name="Imamoto F."/>
            <person name="Kisu Y."/>
            <person name="Tanaka S."/>
            <person name="Isogai T."/>
            <person name="Imai J."/>
            <person name="Watanabe S."/>
            <person name="Nomura N."/>
        </authorList>
    </citation>
    <scope>NUCLEOTIDE SEQUENCE [LARGE SCALE MRNA]</scope>
</reference>
<reference key="6">
    <citation type="submission" date="2005-07" db="EMBL/GenBank/DDBJ databases">
        <authorList>
            <person name="Mural R.J."/>
            <person name="Istrail S."/>
            <person name="Sutton G.G."/>
            <person name="Florea L."/>
            <person name="Halpern A.L."/>
            <person name="Mobarry C.M."/>
            <person name="Lippert R."/>
            <person name="Walenz B."/>
            <person name="Shatkay H."/>
            <person name="Dew I."/>
            <person name="Miller J.R."/>
            <person name="Flanigan M.J."/>
            <person name="Edwards N.J."/>
            <person name="Bolanos R."/>
            <person name="Fasulo D."/>
            <person name="Halldorsson B.V."/>
            <person name="Hannenhalli S."/>
            <person name="Turner R."/>
            <person name="Yooseph S."/>
            <person name="Lu F."/>
            <person name="Nusskern D.R."/>
            <person name="Shue B.C."/>
            <person name="Zheng X.H."/>
            <person name="Zhong F."/>
            <person name="Delcher A.L."/>
            <person name="Huson D.H."/>
            <person name="Kravitz S.A."/>
            <person name="Mouchard L."/>
            <person name="Reinert K."/>
            <person name="Remington K.A."/>
            <person name="Clark A.G."/>
            <person name="Waterman M.S."/>
            <person name="Eichler E.E."/>
            <person name="Adams M.D."/>
            <person name="Hunkapiller M.W."/>
            <person name="Myers E.W."/>
            <person name="Venter J.C."/>
        </authorList>
    </citation>
    <scope>NUCLEOTIDE SEQUENCE [LARGE SCALE GENOMIC DNA]</scope>
</reference>
<reference key="7">
    <citation type="journal article" date="2004" name="Genome Res.">
        <title>The status, quality, and expansion of the NIH full-length cDNA project: the Mammalian Gene Collection (MGC).</title>
        <authorList>
            <consortium name="The MGC Project Team"/>
        </authorList>
    </citation>
    <scope>NUCLEOTIDE SEQUENCE [LARGE SCALE MRNA]</scope>
    <source>
        <tissue>Lymph</tissue>
    </source>
</reference>
<reference key="8">
    <citation type="submission" date="2006-05" db="UniProtKB">
        <authorList>
            <person name="Bienvenut W.V."/>
            <person name="Kanor S."/>
            <person name="Tissot J.-D."/>
            <person name="Quadroni M."/>
        </authorList>
    </citation>
    <scope>PROTEIN SEQUENCE OF 2-20; 33-46 AND 50-62</scope>
    <scope>CLEAVAGE OF INITIATOR METHIONINE</scope>
    <scope>ACETYLATION AT THR-2</scope>
    <scope>IDENTIFICATION BY MASS SPECTROMETRY</scope>
    <source>
        <tissue>T-cell</tissue>
    </source>
</reference>
<reference key="9">
    <citation type="journal article" date="1990" name="Electrophoresis">
        <title>Sequence analysis of proteins separated by polyacrylamide gel electrophoresis: towards an integrated protein database.</title>
        <authorList>
            <person name="Aebersold R."/>
            <person name="Leavitt J."/>
        </authorList>
    </citation>
    <scope>PROTEIN SEQUENCE OF 10-19; 21-25; 51-58; 142-148 AND 150-156</scope>
</reference>
<reference key="10">
    <citation type="journal article" date="1993" name="Genes Chromosomes Cancer">
        <title>Identification of a novel protein with GDP dissociation inhibitor activity for the ras-like proteins CDC42Hs and rac I.</title>
        <authorList>
            <person name="Adra C.N."/>
            <person name="Ko J."/>
            <person name="Leonard D."/>
            <person name="Wirth L.J."/>
            <person name="Cerione R.A."/>
            <person name="Lim B."/>
        </authorList>
    </citation>
    <scope>FUNCTION</scope>
    <scope>INTERACTION WITH CDC42 AND RAC1</scope>
</reference>
<reference key="11">
    <citation type="journal article" date="2000" name="Vet. Immunol. Immunopathol.">
        <title>Cloning of bovine low molecular weight GTPases (Rac1 and Rac2) and Rho GDP-dissociation inhibitor 2 (D4-GDI).</title>
        <authorList>
            <person name="Davis A.R."/>
            <person name="Clements M.K."/>
            <person name="Bunger P.L."/>
            <person name="Siemsen D.W."/>
            <person name="Quinn M.T."/>
        </authorList>
    </citation>
    <scope>SUBCELLULAR LOCATION</scope>
</reference>
<reference key="12">
    <citation type="journal article" date="2005" name="Nat. Biotechnol.">
        <title>Immunoaffinity profiling of tyrosine phosphorylation in cancer cells.</title>
        <authorList>
            <person name="Rush J."/>
            <person name="Moritz A."/>
            <person name="Lee K.A."/>
            <person name="Guo A."/>
            <person name="Goss V.L."/>
            <person name="Spek E.J."/>
            <person name="Zhang H."/>
            <person name="Zha X.-M."/>
            <person name="Polakiewicz R.D."/>
            <person name="Comb M.J."/>
        </authorList>
    </citation>
    <scope>PHOSPHORYLATION [LARGE SCALE ANALYSIS] AT TYR-24</scope>
    <scope>IDENTIFICATION BY MASS SPECTROMETRY [LARGE SCALE ANALYSIS]</scope>
</reference>
<reference key="13">
    <citation type="journal article" date="2009" name="Sci. Signal.">
        <title>Quantitative phosphoproteomic analysis of T cell receptor signaling reveals system-wide modulation of protein-protein interactions.</title>
        <authorList>
            <person name="Mayya V."/>
            <person name="Lundgren D.H."/>
            <person name="Hwang S.-I."/>
            <person name="Rezaul K."/>
            <person name="Wu L."/>
            <person name="Eng J.K."/>
            <person name="Rodionov V."/>
            <person name="Han D.K."/>
        </authorList>
    </citation>
    <scope>PHOSPHORYLATION [LARGE SCALE ANALYSIS] AT SER-145</scope>
    <scope>IDENTIFICATION BY MASS SPECTROMETRY [LARGE SCALE ANALYSIS]</scope>
    <source>
        <tissue>Leukemic T-cell</tissue>
    </source>
</reference>
<reference key="14">
    <citation type="journal article" date="2009" name="Science">
        <title>Lysine acetylation targets protein complexes and co-regulates major cellular functions.</title>
        <authorList>
            <person name="Choudhary C."/>
            <person name="Kumar C."/>
            <person name="Gnad F."/>
            <person name="Nielsen M.L."/>
            <person name="Rehman M."/>
            <person name="Walther T.C."/>
            <person name="Olsen J.V."/>
            <person name="Mann M."/>
        </authorList>
    </citation>
    <scope>ACETYLATION [LARGE SCALE ANALYSIS] AT LYS-21; LYS-25; LYS-40; LYS-47; LYS-102; LYS-124 AND LYS-175</scope>
    <scope>IDENTIFICATION BY MASS SPECTROMETRY [LARGE SCALE ANALYSIS]</scope>
</reference>
<reference key="15">
    <citation type="journal article" date="2010" name="Nat. Cell Biol.">
        <title>Regulation of Rho GTPase crosstalk, degradation and activity by RhoGDI1.</title>
        <authorList>
            <person name="Boulter E."/>
            <person name="Garcia-Mata R."/>
            <person name="Guilluy C."/>
            <person name="Dubash A."/>
            <person name="Rossi G."/>
            <person name="Brennwald P.J."/>
            <person name="Burridge K."/>
        </authorList>
    </citation>
    <scope>INTERACTION WITH RHOA</scope>
</reference>
<reference key="16">
    <citation type="journal article" date="2011" name="BMC Syst. Biol.">
        <title>Initial characterization of the human central proteome.</title>
        <authorList>
            <person name="Burkard T.R."/>
            <person name="Planyavsky M."/>
            <person name="Kaupe I."/>
            <person name="Breitwieser F.P."/>
            <person name="Buerckstuemmer T."/>
            <person name="Bennett K.L."/>
            <person name="Superti-Furga G."/>
            <person name="Colinge J."/>
        </authorList>
    </citation>
    <scope>IDENTIFICATION BY MASS SPECTROMETRY [LARGE SCALE ANALYSIS]</scope>
</reference>
<reference key="17">
    <citation type="journal article" date="2014" name="J. Proteomics">
        <title>An enzyme assisted RP-RPLC approach for in-depth analysis of human liver phosphoproteome.</title>
        <authorList>
            <person name="Bian Y."/>
            <person name="Song C."/>
            <person name="Cheng K."/>
            <person name="Dong M."/>
            <person name="Wang F."/>
            <person name="Huang J."/>
            <person name="Sun D."/>
            <person name="Wang L."/>
            <person name="Ye M."/>
            <person name="Zou H."/>
        </authorList>
    </citation>
    <scope>IDENTIFICATION BY MASS SPECTROMETRY [LARGE SCALE ANALYSIS]</scope>
    <source>
        <tissue>Liver</tissue>
    </source>
</reference>
<reference key="18">
    <citation type="journal article" date="2015" name="Proteomics">
        <title>N-terminome analysis of the human mitochondrial proteome.</title>
        <authorList>
            <person name="Vaca Jacome A.S."/>
            <person name="Rabilloud T."/>
            <person name="Schaeffer-Reiss C."/>
            <person name="Rompais M."/>
            <person name="Ayoub D."/>
            <person name="Lane L."/>
            <person name="Bairoch A."/>
            <person name="Van Dorsselaer A."/>
            <person name="Carapito C."/>
        </authorList>
    </citation>
    <scope>IDENTIFICATION BY MASS SPECTROMETRY [LARGE SCALE ANALYSIS]</scope>
</reference>
<reference key="19">
    <citation type="journal article" date="2000" name="Nat. Struct. Biol.">
        <title>The Rac-RhoGDI complex and the structural basis for the regulation of Rho proteins by RhoGDI.</title>
        <authorList>
            <person name="Scheffzek K."/>
            <person name="Stephan I."/>
            <person name="Jensen O.N."/>
            <person name="Illenberger D."/>
            <person name="Gierschik P."/>
        </authorList>
    </citation>
    <scope>X-RAY CRYSTALLOGRAPHY (2.35 ANGSTROMS) OF COMPLEX WITH RAC2</scope>
</reference>
<evidence type="ECO:0000256" key="1">
    <source>
        <dbReference type="SAM" id="MobiDB-lite"/>
    </source>
</evidence>
<evidence type="ECO:0000269" key="2">
    <source>
    </source>
</evidence>
<evidence type="ECO:0000269" key="3">
    <source>
    </source>
</evidence>
<evidence type="ECO:0000269" key="4">
    <source>
    </source>
</evidence>
<evidence type="ECO:0000269" key="5">
    <source>
    </source>
</evidence>
<evidence type="ECO:0000269" key="6">
    <source>
    </source>
</evidence>
<evidence type="ECO:0000269" key="7">
    <source>
    </source>
</evidence>
<evidence type="ECO:0000269" key="8">
    <source ref="8"/>
</evidence>
<evidence type="ECO:0000303" key="9">
    <source>
    </source>
</evidence>
<evidence type="ECO:0000305" key="10"/>
<evidence type="ECO:0007744" key="11">
    <source>
    </source>
</evidence>
<evidence type="ECO:0007744" key="12">
    <source>
    </source>
</evidence>
<evidence type="ECO:0007744" key="13">
    <source>
    </source>
</evidence>
<evidence type="ECO:0007829" key="14">
    <source>
        <dbReference type="PDB" id="1DS6"/>
    </source>
</evidence>
<evidence type="ECO:0007829" key="15">
    <source>
        <dbReference type="PDB" id="5H1D"/>
    </source>
</evidence>
<protein>
    <recommendedName>
        <fullName>Rho GDP-dissociation inhibitor 2</fullName>
        <shortName>Rho GDI 2</shortName>
    </recommendedName>
    <alternativeName>
        <fullName evidence="9">Ly-GDI</fullName>
    </alternativeName>
    <alternativeName>
        <fullName>Rho-GDI beta</fullName>
    </alternativeName>
</protein>
<feature type="initiator methionine" description="Removed" evidence="8">
    <location>
        <position position="1"/>
    </location>
</feature>
<feature type="chain" id="PRO_0000219016" description="Rho GDP-dissociation inhibitor 2">
    <location>
        <begin position="2"/>
        <end position="201"/>
    </location>
</feature>
<feature type="region of interest" description="Disordered" evidence="1">
    <location>
        <begin position="1"/>
        <end position="38"/>
    </location>
</feature>
<feature type="modified residue" description="N-acetylthreonine" evidence="8">
    <location>
        <position position="2"/>
    </location>
</feature>
<feature type="modified residue" description="N6-acetyllysine" evidence="12">
    <location>
        <position position="21"/>
    </location>
</feature>
<feature type="modified residue" description="Phosphotyrosine" evidence="11">
    <location>
        <position position="24"/>
    </location>
</feature>
<feature type="modified residue" description="N6-acetyllysine" evidence="12">
    <location>
        <position position="25"/>
    </location>
</feature>
<feature type="modified residue" description="N6-acetyllysine" evidence="12">
    <location>
        <position position="40"/>
    </location>
</feature>
<feature type="modified residue" description="N6-acetyllysine" evidence="12">
    <location>
        <position position="47"/>
    </location>
</feature>
<feature type="modified residue" description="N6-acetyllysine" evidence="12">
    <location>
        <position position="102"/>
    </location>
</feature>
<feature type="modified residue" description="N6-acetyllysine" evidence="12">
    <location>
        <position position="124"/>
    </location>
</feature>
<feature type="modified residue" description="Phosphoserine" evidence="13">
    <location>
        <position position="145"/>
    </location>
</feature>
<feature type="modified residue" description="N6-acetyllysine" evidence="12">
    <location>
        <position position="175"/>
    </location>
</feature>
<feature type="sequence conflict" description="In Ref. 9; AA sequence." evidence="10" ref="9">
    <original>Y</original>
    <variation>V</variation>
    <location>
        <position position="153"/>
    </location>
</feature>
<feature type="sequence conflict" description="In Ref. 3; L07916." evidence="10" ref="3">
    <original>RG</original>
    <variation>QD</variation>
    <location>
        <begin position="169"/>
        <end position="170"/>
    </location>
</feature>
<feature type="helix" evidence="14">
    <location>
        <begin position="32"/>
        <end position="37"/>
    </location>
</feature>
<feature type="turn" evidence="14">
    <location>
        <begin position="38"/>
        <end position="41"/>
    </location>
</feature>
<feature type="helix" evidence="14">
    <location>
        <begin position="43"/>
        <end position="52"/>
    </location>
</feature>
<feature type="strand" evidence="14">
    <location>
        <begin position="62"/>
        <end position="64"/>
    </location>
</feature>
<feature type="strand" evidence="15">
    <location>
        <begin position="67"/>
        <end position="75"/>
    </location>
</feature>
<feature type="strand" evidence="15">
    <location>
        <begin position="79"/>
        <end position="81"/>
    </location>
</feature>
<feature type="strand" evidence="15">
    <location>
        <begin position="84"/>
        <end position="86"/>
    </location>
</feature>
<feature type="helix" evidence="15">
    <location>
        <begin position="91"/>
        <end position="94"/>
    </location>
</feature>
<feature type="strand" evidence="15">
    <location>
        <begin position="99"/>
        <end position="102"/>
    </location>
</feature>
<feature type="strand" evidence="15">
    <location>
        <begin position="106"/>
        <end position="115"/>
    </location>
</feature>
<feature type="strand" evidence="15">
    <location>
        <begin position="120"/>
        <end position="131"/>
    </location>
</feature>
<feature type="strand" evidence="15">
    <location>
        <begin position="134"/>
        <end position="146"/>
    </location>
</feature>
<feature type="strand" evidence="15">
    <location>
        <begin position="153"/>
        <end position="156"/>
    </location>
</feature>
<feature type="helix" evidence="15">
    <location>
        <begin position="166"/>
        <end position="168"/>
    </location>
</feature>
<feature type="strand" evidence="15">
    <location>
        <begin position="170"/>
        <end position="180"/>
    </location>
</feature>
<feature type="strand" evidence="15">
    <location>
        <begin position="186"/>
        <end position="197"/>
    </location>
</feature>
<name>GDIR2_HUMAN</name>
<dbReference type="EMBL" id="L20688">
    <property type="protein sequence ID" value="AAA59539.1"/>
    <property type="molecule type" value="mRNA"/>
</dbReference>
<dbReference type="EMBL" id="X69549">
    <property type="protein sequence ID" value="CAA49280.1"/>
    <property type="molecule type" value="mRNA"/>
</dbReference>
<dbReference type="EMBL" id="L07916">
    <property type="status" value="NOT_ANNOTATED_CDS"/>
    <property type="molecule type" value="mRNA"/>
</dbReference>
<dbReference type="EMBL" id="AF498927">
    <property type="protein sequence ID" value="AAM21075.1"/>
    <property type="molecule type" value="mRNA"/>
</dbReference>
<dbReference type="EMBL" id="AB451315">
    <property type="protein sequence ID" value="BAG70129.1"/>
    <property type="molecule type" value="mRNA"/>
</dbReference>
<dbReference type="EMBL" id="AB451445">
    <property type="protein sequence ID" value="BAG70259.1"/>
    <property type="molecule type" value="mRNA"/>
</dbReference>
<dbReference type="EMBL" id="CH471094">
    <property type="protein sequence ID" value="EAW96336.1"/>
    <property type="molecule type" value="Genomic_DNA"/>
</dbReference>
<dbReference type="EMBL" id="BC009200">
    <property type="protein sequence ID" value="AAH09200.1"/>
    <property type="molecule type" value="mRNA"/>
</dbReference>
<dbReference type="CCDS" id="CCDS8671.1"/>
<dbReference type="PIR" id="A47742">
    <property type="entry name" value="A47742"/>
</dbReference>
<dbReference type="RefSeq" id="NP_001166.3">
    <property type="nucleotide sequence ID" value="NM_001175.7"/>
</dbReference>
<dbReference type="RefSeq" id="NP_001308349.1">
    <property type="nucleotide sequence ID" value="NM_001321420.2"/>
</dbReference>
<dbReference type="RefSeq" id="NP_001308350.1">
    <property type="nucleotide sequence ID" value="NM_001321421.2"/>
</dbReference>
<dbReference type="RefSeq" id="NP_001308351.1">
    <property type="nucleotide sequence ID" value="NM_001321422.1"/>
</dbReference>
<dbReference type="RefSeq" id="NP_001308352.1">
    <property type="nucleotide sequence ID" value="NM_001321423.1"/>
</dbReference>
<dbReference type="PDB" id="1DS6">
    <property type="method" value="X-ray"/>
    <property type="resolution" value="2.35 A"/>
    <property type="chains" value="B=23-199"/>
</dbReference>
<dbReference type="PDB" id="5H1D">
    <property type="method" value="X-ray"/>
    <property type="resolution" value="1.49 A"/>
    <property type="chains" value="A=61-201"/>
</dbReference>
<dbReference type="PDBsum" id="1DS6"/>
<dbReference type="PDBsum" id="5H1D"/>
<dbReference type="SMR" id="P52566"/>
<dbReference type="BioGRID" id="106890">
    <property type="interactions" value="43"/>
</dbReference>
<dbReference type="CORUM" id="P52566"/>
<dbReference type="DIP" id="DIP-40959N"/>
<dbReference type="ELM" id="P52566"/>
<dbReference type="FunCoup" id="P52566">
    <property type="interactions" value="1374"/>
</dbReference>
<dbReference type="IntAct" id="P52566">
    <property type="interactions" value="28"/>
</dbReference>
<dbReference type="MINT" id="P52566"/>
<dbReference type="STRING" id="9606.ENSP00000228945"/>
<dbReference type="GlyCosmos" id="P52566">
    <property type="glycosylation" value="2 sites, 1 glycan"/>
</dbReference>
<dbReference type="GlyGen" id="P52566">
    <property type="glycosylation" value="2 sites, 1 O-linked glycan (2 sites)"/>
</dbReference>
<dbReference type="iPTMnet" id="P52566"/>
<dbReference type="MetOSite" id="P52566"/>
<dbReference type="PhosphoSitePlus" id="P52566"/>
<dbReference type="SwissPalm" id="P52566"/>
<dbReference type="BioMuta" id="ARHGDIB"/>
<dbReference type="OGP" id="P52566"/>
<dbReference type="jPOST" id="P52566"/>
<dbReference type="MassIVE" id="P52566"/>
<dbReference type="PaxDb" id="9606-ENSP00000228945"/>
<dbReference type="PeptideAtlas" id="P52566"/>
<dbReference type="PRIDE" id="P52566"/>
<dbReference type="ProteomicsDB" id="56490"/>
<dbReference type="Pumba" id="P52566"/>
<dbReference type="TopDownProteomics" id="P52566"/>
<dbReference type="Antibodypedia" id="12089">
    <property type="antibodies" value="529 antibodies from 38 providers"/>
</dbReference>
<dbReference type="DNASU" id="397"/>
<dbReference type="Ensembl" id="ENST00000228945.9">
    <property type="protein sequence ID" value="ENSP00000228945.4"/>
    <property type="gene ID" value="ENSG00000111348.9"/>
</dbReference>
<dbReference type="Ensembl" id="ENST00000541546.5">
    <property type="protein sequence ID" value="ENSP00000440560.1"/>
    <property type="gene ID" value="ENSG00000111348.9"/>
</dbReference>
<dbReference type="Ensembl" id="ENST00000541644.5">
    <property type="protein sequence ID" value="ENSP00000444860.1"/>
    <property type="gene ID" value="ENSG00000111348.9"/>
</dbReference>
<dbReference type="GeneID" id="397"/>
<dbReference type="KEGG" id="hsa:397"/>
<dbReference type="MANE-Select" id="ENST00000228945.9">
    <property type="protein sequence ID" value="ENSP00000228945.4"/>
    <property type="RefSeq nucleotide sequence ID" value="NM_001175.7"/>
    <property type="RefSeq protein sequence ID" value="NP_001166.3"/>
</dbReference>
<dbReference type="UCSC" id="uc001rcq.2">
    <property type="organism name" value="human"/>
</dbReference>
<dbReference type="AGR" id="HGNC:679"/>
<dbReference type="CTD" id="397"/>
<dbReference type="DisGeNET" id="397"/>
<dbReference type="GeneCards" id="ARHGDIB"/>
<dbReference type="HGNC" id="HGNC:679">
    <property type="gene designation" value="ARHGDIB"/>
</dbReference>
<dbReference type="HPA" id="ENSG00000111348">
    <property type="expression patterns" value="Group enriched (bone marrow, lymphoid tissue)"/>
</dbReference>
<dbReference type="MIM" id="602843">
    <property type="type" value="gene"/>
</dbReference>
<dbReference type="neXtProt" id="NX_P52566"/>
<dbReference type="OpenTargets" id="ENSG00000111348"/>
<dbReference type="PharmGKB" id="PA24964"/>
<dbReference type="VEuPathDB" id="HostDB:ENSG00000111348"/>
<dbReference type="eggNOG" id="KOG3205">
    <property type="taxonomic scope" value="Eukaryota"/>
</dbReference>
<dbReference type="GeneTree" id="ENSGT00390000006233"/>
<dbReference type="InParanoid" id="P52566"/>
<dbReference type="OMA" id="YKPTAAK"/>
<dbReference type="OrthoDB" id="1683373at2759"/>
<dbReference type="PAN-GO" id="P52566">
    <property type="GO annotations" value="4 GO annotations based on evolutionary models"/>
</dbReference>
<dbReference type="PhylomeDB" id="P52566"/>
<dbReference type="TreeFam" id="TF105387"/>
<dbReference type="PathwayCommons" id="P52566"/>
<dbReference type="Reactome" id="R-HSA-8980692">
    <property type="pathway name" value="RHOA GTPase cycle"/>
</dbReference>
<dbReference type="Reactome" id="R-HSA-9013148">
    <property type="pathway name" value="CDC42 GTPase cycle"/>
</dbReference>
<dbReference type="Reactome" id="R-HSA-9013149">
    <property type="pathway name" value="RAC1 GTPase cycle"/>
</dbReference>
<dbReference type="Reactome" id="R-HSA-9013407">
    <property type="pathway name" value="RHOH GTPase cycle"/>
</dbReference>
<dbReference type="Reactome" id="R-HSA-9013408">
    <property type="pathway name" value="RHOG GTPase cycle"/>
</dbReference>
<dbReference type="Reactome" id="R-HSA-9013423">
    <property type="pathway name" value="RAC3 GTPase cycle"/>
</dbReference>
<dbReference type="SignaLink" id="P52566"/>
<dbReference type="SIGNOR" id="P52566"/>
<dbReference type="BioGRID-ORCS" id="397">
    <property type="hits" value="17 hits in 1157 CRISPR screens"/>
</dbReference>
<dbReference type="ChiTaRS" id="ARHGDIB">
    <property type="organism name" value="human"/>
</dbReference>
<dbReference type="EvolutionaryTrace" id="P52566"/>
<dbReference type="GeneWiki" id="ARHGDIB"/>
<dbReference type="GenomeRNAi" id="397"/>
<dbReference type="Pharos" id="P52566">
    <property type="development level" value="Tbio"/>
</dbReference>
<dbReference type="PRO" id="PR:P52566"/>
<dbReference type="Proteomes" id="UP000005640">
    <property type="component" value="Chromosome 12"/>
</dbReference>
<dbReference type="RNAct" id="P52566">
    <property type="molecule type" value="protein"/>
</dbReference>
<dbReference type="Bgee" id="ENSG00000111348">
    <property type="expression patterns" value="Expressed in blood and 208 other cell types or tissues"/>
</dbReference>
<dbReference type="ExpressionAtlas" id="P52566">
    <property type="expression patterns" value="baseline and differential"/>
</dbReference>
<dbReference type="GO" id="GO:0005737">
    <property type="term" value="C:cytoplasm"/>
    <property type="evidence" value="ECO:0000304"/>
    <property type="project" value="UniProtKB"/>
</dbReference>
<dbReference type="GO" id="GO:0031410">
    <property type="term" value="C:cytoplasmic vesicle"/>
    <property type="evidence" value="ECO:0000304"/>
    <property type="project" value="ProtInc"/>
</dbReference>
<dbReference type="GO" id="GO:0005856">
    <property type="term" value="C:cytoskeleton"/>
    <property type="evidence" value="ECO:0000304"/>
    <property type="project" value="UniProtKB"/>
</dbReference>
<dbReference type="GO" id="GO:0005829">
    <property type="term" value="C:cytosol"/>
    <property type="evidence" value="ECO:0000314"/>
    <property type="project" value="UniProtKB"/>
</dbReference>
<dbReference type="GO" id="GO:0070062">
    <property type="term" value="C:extracellular exosome"/>
    <property type="evidence" value="ECO:0007005"/>
    <property type="project" value="UniProtKB"/>
</dbReference>
<dbReference type="GO" id="GO:0016020">
    <property type="term" value="C:membrane"/>
    <property type="evidence" value="ECO:0000318"/>
    <property type="project" value="GO_Central"/>
</dbReference>
<dbReference type="GO" id="GO:0005096">
    <property type="term" value="F:GTPase activator activity"/>
    <property type="evidence" value="ECO:0007669"/>
    <property type="project" value="UniProtKB-KW"/>
</dbReference>
<dbReference type="GO" id="GO:0003924">
    <property type="term" value="F:GTPase activity"/>
    <property type="evidence" value="ECO:0000315"/>
    <property type="project" value="CACAO"/>
</dbReference>
<dbReference type="GO" id="GO:0005094">
    <property type="term" value="F:Rho GDP-dissociation inhibitor activity"/>
    <property type="evidence" value="ECO:0000314"/>
    <property type="project" value="UniProtKB"/>
</dbReference>
<dbReference type="GO" id="GO:0031267">
    <property type="term" value="F:small GTPase binding"/>
    <property type="evidence" value="ECO:0000314"/>
    <property type="project" value="UniProtKB"/>
</dbReference>
<dbReference type="GO" id="GO:0071461">
    <property type="term" value="P:cellular response to redox state"/>
    <property type="evidence" value="ECO:0007669"/>
    <property type="project" value="Ensembl"/>
</dbReference>
<dbReference type="GO" id="GO:1901164">
    <property type="term" value="P:negative regulation of trophoblast cell migration"/>
    <property type="evidence" value="ECO:0000314"/>
    <property type="project" value="CACAO"/>
</dbReference>
<dbReference type="GO" id="GO:0035023">
    <property type="term" value="P:regulation of Rho protein signal transduction"/>
    <property type="evidence" value="ECO:0000314"/>
    <property type="project" value="UniProtKB"/>
</dbReference>
<dbReference type="GO" id="GO:0007266">
    <property type="term" value="P:Rho protein signal transduction"/>
    <property type="evidence" value="ECO:0000318"/>
    <property type="project" value="GO_Central"/>
</dbReference>
<dbReference type="FunFam" id="2.70.50.30:FF:000004">
    <property type="entry name" value="Rho GDP-dissociation inhibitor 1"/>
    <property type="match status" value="1"/>
</dbReference>
<dbReference type="Gene3D" id="2.70.50.30">
    <property type="entry name" value="Coagulation Factor XIII, subunit A, domain 1"/>
    <property type="match status" value="1"/>
</dbReference>
<dbReference type="InterPro" id="IPR014756">
    <property type="entry name" value="Ig_E-set"/>
</dbReference>
<dbReference type="InterPro" id="IPR000406">
    <property type="entry name" value="Rho_GDI"/>
</dbReference>
<dbReference type="InterPro" id="IPR024792">
    <property type="entry name" value="RhoGDI_dom_sf"/>
</dbReference>
<dbReference type="PANTHER" id="PTHR10980">
    <property type="entry name" value="RHO GDP-DISSOCIATION INHIBITOR"/>
    <property type="match status" value="1"/>
</dbReference>
<dbReference type="PANTHER" id="PTHR10980:SF15">
    <property type="entry name" value="RHO GDP-DISSOCIATION INHIBITOR 2"/>
    <property type="match status" value="1"/>
</dbReference>
<dbReference type="Pfam" id="PF02115">
    <property type="entry name" value="Rho_GDI"/>
    <property type="match status" value="1"/>
</dbReference>
<dbReference type="PRINTS" id="PR00492">
    <property type="entry name" value="RHOGDI"/>
</dbReference>
<dbReference type="SUPFAM" id="SSF81296">
    <property type="entry name" value="E set domains"/>
    <property type="match status" value="1"/>
</dbReference>
<comment type="function">
    <text evidence="5 6 7">Regulates the GDP/GTP exchange reaction of the Rho proteins by inhibiting the dissociation of GDP from them, and the subsequent binding of GTP to them (PubMed:7512369, PubMed:8356058). Regulates reorganization of the actin cytoskeleton mediated by Rho family members (PubMed:8262133).</text>
</comment>
<comment type="subunit">
    <text evidence="2 4 5">Interacts with RHOA (PubMed:20400958). Interacts with RAC1 (PubMed:7512369). Interacts with RAC2 (PubMed:10655614). Interacts with CDC42 (PubMed:7512369).</text>
</comment>
<comment type="interaction">
    <interactant intactId="EBI-2806617">
        <id>P52566</id>
    </interactant>
    <interactant intactId="EBI-852851">
        <id>P01100</id>
        <label>FOS</label>
    </interactant>
    <organismsDiffer>false</organismsDiffer>
    <experiments>3</experiments>
</comment>
<comment type="interaction">
    <interactant intactId="EBI-2806617">
        <id>P52566</id>
    </interactant>
    <interactant intactId="EBI-401755">
        <id>P62993</id>
        <label>GRB2</label>
    </interactant>
    <organismsDiffer>false</organismsDiffer>
    <experiments>3</experiments>
</comment>
<comment type="interaction">
    <interactant intactId="EBI-2806617">
        <id>P52566</id>
    </interactant>
    <interactant intactId="EBI-1052596">
        <id>P31930</id>
        <label>UQCRC1</label>
    </interactant>
    <organismsDiffer>false</organismsDiffer>
    <experiments>3</experiments>
</comment>
<comment type="subcellular location">
    <subcellularLocation>
        <location evidence="3">Cytoplasm</location>
        <location evidence="3">Cytosol</location>
    </subcellularLocation>
</comment>
<comment type="tissue specificity">
    <text evidence="7">Detected in bone marrow, thymus and spleen.</text>
</comment>
<comment type="similarity">
    <text evidence="10">Belongs to the Rho GDI family.</text>
</comment>
<gene>
    <name type="primary">ARHGDIB</name>
    <name type="synonym">GDIA2</name>
    <name type="synonym">GDID4</name>
    <name type="synonym">RAP1GN1</name>
</gene>
<accession>P52566</accession>
<accession>B5BU79</accession>
<proteinExistence type="evidence at protein level"/>